<protein>
    <recommendedName>
        <fullName>Transketolase, chloroplastic</fullName>
        <shortName>TK</shortName>
        <ecNumber>2.2.1.1</ecNumber>
    </recommendedName>
</protein>
<feature type="transit peptide" description="Chloroplast" evidence="1">
    <location>
        <begin position="1"/>
        <end position="67"/>
    </location>
</feature>
<feature type="chain" id="PRO_0000035751" description="Transketolase, chloroplastic">
    <location>
        <begin position="68"/>
        <end position="741"/>
    </location>
</feature>
<feature type="active site" description="Proton donor" evidence="1">
    <location>
        <position position="488"/>
    </location>
</feature>
<feature type="binding site" evidence="1">
    <location>
        <position position="103"/>
    </location>
    <ligand>
        <name>substrate</name>
    </ligand>
</feature>
<feature type="binding site" evidence="1">
    <location>
        <position position="143"/>
    </location>
    <ligand>
        <name>thiamine diphosphate</name>
        <dbReference type="ChEBI" id="CHEBI:58937"/>
    </ligand>
</feature>
<feature type="binding site" evidence="1">
    <location>
        <begin position="192"/>
        <end position="194"/>
    </location>
    <ligand>
        <name>thiamine diphosphate</name>
        <dbReference type="ChEBI" id="CHEBI:58937"/>
    </ligand>
</feature>
<feature type="binding site" evidence="1">
    <location>
        <position position="233"/>
    </location>
    <ligand>
        <name>Mg(2+)</name>
        <dbReference type="ChEBI" id="CHEBI:18420"/>
    </ligand>
</feature>
<feature type="binding site" evidence="1">
    <location>
        <position position="234"/>
    </location>
    <ligand>
        <name>thiamine diphosphate</name>
        <dbReference type="ChEBI" id="CHEBI:58937"/>
    </ligand>
</feature>
<feature type="binding site" evidence="1">
    <location>
        <position position="263"/>
    </location>
    <ligand>
        <name>Mg(2+)</name>
        <dbReference type="ChEBI" id="CHEBI:18420"/>
    </ligand>
</feature>
<feature type="binding site" evidence="1">
    <location>
        <position position="263"/>
    </location>
    <ligand>
        <name>thiamine diphosphate</name>
        <dbReference type="ChEBI" id="CHEBI:58937"/>
    </ligand>
</feature>
<feature type="binding site" evidence="1">
    <location>
        <position position="265"/>
    </location>
    <ligand>
        <name>Mg(2+)</name>
        <dbReference type="ChEBI" id="CHEBI:18420"/>
    </ligand>
</feature>
<feature type="binding site" evidence="1">
    <location>
        <position position="340"/>
    </location>
    <ligand>
        <name>substrate</name>
    </ligand>
</feature>
<feature type="binding site" evidence="1">
    <location>
        <position position="340"/>
    </location>
    <ligand>
        <name>thiamine diphosphate</name>
        <dbReference type="ChEBI" id="CHEBI:58937"/>
    </ligand>
</feature>
<feature type="binding site" evidence="1">
    <location>
        <position position="434"/>
    </location>
    <ligand>
        <name>substrate</name>
    </ligand>
</feature>
<feature type="binding site" evidence="1">
    <location>
        <position position="461"/>
    </location>
    <ligand>
        <name>substrate</name>
    </ligand>
</feature>
<feature type="binding site" evidence="1">
    <location>
        <position position="488"/>
    </location>
    <ligand>
        <name>thiamine diphosphate</name>
        <dbReference type="ChEBI" id="CHEBI:58937"/>
    </ligand>
</feature>
<feature type="binding site" evidence="1">
    <location>
        <position position="515"/>
    </location>
    <ligand>
        <name>thiamine diphosphate</name>
        <dbReference type="ChEBI" id="CHEBI:58937"/>
    </ligand>
</feature>
<feature type="binding site" evidence="1">
    <location>
        <position position="539"/>
    </location>
    <ligand>
        <name>substrate</name>
    </ligand>
</feature>
<feature type="binding site" evidence="1">
    <location>
        <position position="547"/>
    </location>
    <ligand>
        <name>substrate</name>
    </ligand>
</feature>
<feature type="binding site" evidence="1">
    <location>
        <position position="598"/>
    </location>
    <ligand>
        <name>substrate</name>
    </ligand>
</feature>
<feature type="site" description="Important for catalytic activity" evidence="1">
    <location>
        <position position="103"/>
    </location>
</feature>
<feature type="site" description="Important for catalytic activity" evidence="1">
    <location>
        <position position="340"/>
    </location>
</feature>
<dbReference type="EC" id="2.2.1.1"/>
<dbReference type="EMBL" id="Z50099">
    <property type="protein sequence ID" value="CAA90427.1"/>
    <property type="molecule type" value="mRNA"/>
</dbReference>
<dbReference type="PIR" id="S58083">
    <property type="entry name" value="S58083"/>
</dbReference>
<dbReference type="RefSeq" id="NP_001275202.1">
    <property type="nucleotide sequence ID" value="NM_001288273.1"/>
</dbReference>
<dbReference type="SMR" id="Q43848"/>
<dbReference type="FunCoup" id="Q43848">
    <property type="interactions" value="2267"/>
</dbReference>
<dbReference type="STRING" id="4113.Q43848"/>
<dbReference type="PaxDb" id="4113-PGSC0003DMT400056799"/>
<dbReference type="GeneID" id="102591899"/>
<dbReference type="KEGG" id="sot:102591899"/>
<dbReference type="eggNOG" id="KOG0523">
    <property type="taxonomic scope" value="Eukaryota"/>
</dbReference>
<dbReference type="InParanoid" id="Q43848"/>
<dbReference type="OrthoDB" id="10267175at2759"/>
<dbReference type="UniPathway" id="UPA00116"/>
<dbReference type="Proteomes" id="UP000011115">
    <property type="component" value="Unassembled WGS sequence"/>
</dbReference>
<dbReference type="ExpressionAtlas" id="Q43848">
    <property type="expression patterns" value="baseline and differential"/>
</dbReference>
<dbReference type="GO" id="GO:0009535">
    <property type="term" value="C:chloroplast thylakoid membrane"/>
    <property type="evidence" value="ECO:0000250"/>
    <property type="project" value="UniProtKB"/>
</dbReference>
<dbReference type="GO" id="GO:0005829">
    <property type="term" value="C:cytosol"/>
    <property type="evidence" value="ECO:0000318"/>
    <property type="project" value="GO_Central"/>
</dbReference>
<dbReference type="GO" id="GO:0046872">
    <property type="term" value="F:metal ion binding"/>
    <property type="evidence" value="ECO:0007669"/>
    <property type="project" value="UniProtKB-KW"/>
</dbReference>
<dbReference type="GO" id="GO:0004802">
    <property type="term" value="F:transketolase activity"/>
    <property type="evidence" value="ECO:0000250"/>
    <property type="project" value="UniProtKB"/>
</dbReference>
<dbReference type="GO" id="GO:0006098">
    <property type="term" value="P:pentose-phosphate shunt"/>
    <property type="evidence" value="ECO:0000318"/>
    <property type="project" value="GO_Central"/>
</dbReference>
<dbReference type="GO" id="GO:0019253">
    <property type="term" value="P:reductive pentose-phosphate cycle"/>
    <property type="evidence" value="ECO:0007669"/>
    <property type="project" value="UniProtKB-UniPathway"/>
</dbReference>
<dbReference type="CDD" id="cd07033">
    <property type="entry name" value="TPP_PYR_DXS_TK_like"/>
    <property type="match status" value="1"/>
</dbReference>
<dbReference type="CDD" id="cd02012">
    <property type="entry name" value="TPP_TK"/>
    <property type="match status" value="1"/>
</dbReference>
<dbReference type="FunFam" id="3.40.50.920:FF:000003">
    <property type="entry name" value="Transketolase"/>
    <property type="match status" value="1"/>
</dbReference>
<dbReference type="FunFam" id="3.40.50.970:FF:000003">
    <property type="entry name" value="Transketolase"/>
    <property type="match status" value="1"/>
</dbReference>
<dbReference type="FunFam" id="3.40.50.970:FF:000004">
    <property type="entry name" value="Transketolase"/>
    <property type="match status" value="1"/>
</dbReference>
<dbReference type="Gene3D" id="3.40.50.920">
    <property type="match status" value="1"/>
</dbReference>
<dbReference type="Gene3D" id="3.40.50.970">
    <property type="match status" value="2"/>
</dbReference>
<dbReference type="InterPro" id="IPR029061">
    <property type="entry name" value="THDP-binding"/>
</dbReference>
<dbReference type="InterPro" id="IPR009014">
    <property type="entry name" value="Transketo_C/PFOR_II"/>
</dbReference>
<dbReference type="InterPro" id="IPR055152">
    <property type="entry name" value="Transketolase-like_C_2"/>
</dbReference>
<dbReference type="InterPro" id="IPR005475">
    <property type="entry name" value="Transketolase-like_Pyr-bd"/>
</dbReference>
<dbReference type="InterPro" id="IPR005478">
    <property type="entry name" value="Transketolase_bac-like"/>
</dbReference>
<dbReference type="InterPro" id="IPR020826">
    <property type="entry name" value="Transketolase_BS"/>
</dbReference>
<dbReference type="InterPro" id="IPR049557">
    <property type="entry name" value="Transketolase_CS"/>
</dbReference>
<dbReference type="InterPro" id="IPR033247">
    <property type="entry name" value="Transketolase_fam"/>
</dbReference>
<dbReference type="InterPro" id="IPR005474">
    <property type="entry name" value="Transketolase_N"/>
</dbReference>
<dbReference type="NCBIfam" id="TIGR00232">
    <property type="entry name" value="tktlase_bact"/>
    <property type="match status" value="1"/>
</dbReference>
<dbReference type="PANTHER" id="PTHR43522">
    <property type="entry name" value="TRANSKETOLASE"/>
    <property type="match status" value="1"/>
</dbReference>
<dbReference type="PANTHER" id="PTHR43522:SF2">
    <property type="entry name" value="TRANSKETOLASE 1-RELATED"/>
    <property type="match status" value="1"/>
</dbReference>
<dbReference type="Pfam" id="PF02779">
    <property type="entry name" value="Transket_pyr"/>
    <property type="match status" value="1"/>
</dbReference>
<dbReference type="Pfam" id="PF22613">
    <property type="entry name" value="Transketolase_C_1"/>
    <property type="match status" value="1"/>
</dbReference>
<dbReference type="Pfam" id="PF00456">
    <property type="entry name" value="Transketolase_N"/>
    <property type="match status" value="1"/>
</dbReference>
<dbReference type="SMART" id="SM00861">
    <property type="entry name" value="Transket_pyr"/>
    <property type="match status" value="1"/>
</dbReference>
<dbReference type="SUPFAM" id="SSF52518">
    <property type="entry name" value="Thiamin diphosphate-binding fold (THDP-binding)"/>
    <property type="match status" value="2"/>
</dbReference>
<dbReference type="SUPFAM" id="SSF52922">
    <property type="entry name" value="TK C-terminal domain-like"/>
    <property type="match status" value="1"/>
</dbReference>
<dbReference type="PROSITE" id="PS00801">
    <property type="entry name" value="TRANSKETOLASE_1"/>
    <property type="match status" value="1"/>
</dbReference>
<dbReference type="PROSITE" id="PS00802">
    <property type="entry name" value="TRANSKETOLASE_2"/>
    <property type="match status" value="1"/>
</dbReference>
<sequence>MASSSSLTLSQVIFSPSLPRHGSSSSSSPSLSFSTFSGLKSTPFTSSHRRILPSTTVTKQQFSVRASAAVETLEKTDAAIVEKSVNTIRFLAIDAVEKANSGHPGLPMGCAPMGHILYDEVMKYNPKNPYWFNRDRFVLSAGHGCMLQYALLHLAGYDSVQEDDLKSFRQWGSRIPGHPENFETPGVEVTTGPLGQGIANAVGLAVAEKHLAARFNKPDAEIVDHYTYVILGDGCQMEGISNEVCSLAGHWGLGKLIAFYDDNHISIDGDTEIAFTEDVSARFESLGWHVIWVKNGNTGYDEIRAAIKEAKAVKDKPTMIKVTTTIGFGSPNKANSYSVHGSGLGAKEVEATRNNLGWPYEPFHVPEDVKSHWSRHTPEGAALETEWNAKFAEYEKKYAEEAADLKSIITGELPAGWEKALPTYTPESPADATRNLSQQNLNALAKVLPGFLGGSADLASSNMTLLKMFGDFQKNTPEERNLRFGVREHGMGAICNGIALHSLGLIPYCATFFVFTDYMRGAMRISALSEAGVIYVMTHDSIGLGEDGPTHQPIEHLASFRAMPNILMFRPADGNETAGAYKVAVLKRKTPSILALSRQKLPQLAGTSIEGAAKGGYIVSDNSSGNKPDVILIGTGSELEIAVKAAEELKKEGKTVRVVSFVCWELYDEQSAEYKESVLPSSVTARVSIEAGSTFGWQKFVGDKGKAIGIDGFGASAPADKIYKEFGITAEAVVAAAKQVS</sequence>
<reference key="1">
    <citation type="online journal article" date="1996" name="Plant Gene Register">
        <title>Primary structure of chloroplast transketolase from potato.</title>
        <authorList>
            <person name="Teige M."/>
            <person name="Kopriva S."/>
            <person name="Bauwe H."/>
            <person name="Suess K.-H."/>
        </authorList>
        <locator>PGR96-121</locator>
    </citation>
    <scope>NUCLEOTIDE SEQUENCE [MRNA]</scope>
    <source>
        <strain>cv. Desiree</strain>
        <tissue>Leaf</tissue>
    </source>
</reference>
<accession>Q43848</accession>
<evidence type="ECO:0000250" key="1"/>
<evidence type="ECO:0000305" key="2"/>
<keyword id="KW-0106">Calcium</keyword>
<keyword id="KW-0150">Chloroplast</keyword>
<keyword id="KW-0460">Magnesium</keyword>
<keyword id="KW-0472">Membrane</keyword>
<keyword id="KW-0479">Metal-binding</keyword>
<keyword id="KW-0934">Plastid</keyword>
<keyword id="KW-1185">Reference proteome</keyword>
<keyword id="KW-0786">Thiamine pyrophosphate</keyword>
<keyword id="KW-0793">Thylakoid</keyword>
<keyword id="KW-0808">Transferase</keyword>
<keyword id="KW-0809">Transit peptide</keyword>
<name>TKTC_SOLTU</name>
<organism>
    <name type="scientific">Solanum tuberosum</name>
    <name type="common">Potato</name>
    <dbReference type="NCBI Taxonomy" id="4113"/>
    <lineage>
        <taxon>Eukaryota</taxon>
        <taxon>Viridiplantae</taxon>
        <taxon>Streptophyta</taxon>
        <taxon>Embryophyta</taxon>
        <taxon>Tracheophyta</taxon>
        <taxon>Spermatophyta</taxon>
        <taxon>Magnoliopsida</taxon>
        <taxon>eudicotyledons</taxon>
        <taxon>Gunneridae</taxon>
        <taxon>Pentapetalae</taxon>
        <taxon>asterids</taxon>
        <taxon>lamiids</taxon>
        <taxon>Solanales</taxon>
        <taxon>Solanaceae</taxon>
        <taxon>Solanoideae</taxon>
        <taxon>Solaneae</taxon>
        <taxon>Solanum</taxon>
    </lineage>
</organism>
<comment type="function">
    <text evidence="1">Catalyzes the reversible transfer of a two-carbon ketol group from fructose-6-phosphate or sedoheptulose-7-phosphate to glyceraldehyde-3-phosphate to yield xylulose-5-phosphate and erythrose-4-phosphate or ribose-5-phosphate, respectively.</text>
</comment>
<comment type="catalytic activity">
    <reaction>
        <text>D-sedoheptulose 7-phosphate + D-glyceraldehyde 3-phosphate = aldehydo-D-ribose 5-phosphate + D-xylulose 5-phosphate</text>
        <dbReference type="Rhea" id="RHEA:10508"/>
        <dbReference type="ChEBI" id="CHEBI:57483"/>
        <dbReference type="ChEBI" id="CHEBI:57737"/>
        <dbReference type="ChEBI" id="CHEBI:58273"/>
        <dbReference type="ChEBI" id="CHEBI:59776"/>
        <dbReference type="EC" id="2.2.1.1"/>
    </reaction>
</comment>
<comment type="cofactor">
    <cofactor evidence="1">
        <name>Mg(2+)</name>
        <dbReference type="ChEBI" id="CHEBI:18420"/>
    </cofactor>
    <cofactor evidence="1">
        <name>Ca(2+)</name>
        <dbReference type="ChEBI" id="CHEBI:29108"/>
    </cofactor>
    <cofactor evidence="1">
        <name>Mn(2+)</name>
        <dbReference type="ChEBI" id="CHEBI:29035"/>
    </cofactor>
    <cofactor evidence="1">
        <name>Co(2+)</name>
        <dbReference type="ChEBI" id="CHEBI:48828"/>
    </cofactor>
    <text evidence="1">Binds 1 Mg(2+) ion per subunit. Can also utilize other divalent metal cations, such as Ca(2+), Mn(2+) and Co(2+).</text>
</comment>
<comment type="cofactor">
    <cofactor evidence="1">
        <name>thiamine diphosphate</name>
        <dbReference type="ChEBI" id="CHEBI:58937"/>
    </cofactor>
    <text evidence="1">Binds 1 thiamine pyrophosphate per subunit.</text>
</comment>
<comment type="pathway">
    <text>Carbohydrate biosynthesis; Calvin cycle.</text>
</comment>
<comment type="subunit">
    <text evidence="1">Homodimer.</text>
</comment>
<comment type="subcellular location">
    <subcellularLocation>
        <location evidence="1">Plastid</location>
        <location evidence="1">Chloroplast thylakoid membrane</location>
    </subcellularLocation>
</comment>
<comment type="similarity">
    <text evidence="2">Belongs to the transketolase family.</text>
</comment>
<proteinExistence type="evidence at transcript level"/>